<gene>
    <name evidence="1" type="primary">miaB</name>
    <name type="ordered locus">aq_284</name>
</gene>
<dbReference type="EC" id="2.8.4.3" evidence="1"/>
<dbReference type="EMBL" id="AE000657">
    <property type="protein sequence ID" value="AAC06605.1"/>
    <property type="molecule type" value="Genomic_DNA"/>
</dbReference>
<dbReference type="PIR" id="B70326">
    <property type="entry name" value="B70326"/>
</dbReference>
<dbReference type="RefSeq" id="NP_213198.1">
    <property type="nucleotide sequence ID" value="NC_000918.1"/>
</dbReference>
<dbReference type="RefSeq" id="WP_010880136.1">
    <property type="nucleotide sequence ID" value="NC_000918.1"/>
</dbReference>
<dbReference type="SMR" id="O66638"/>
<dbReference type="FunCoup" id="O66638">
    <property type="interactions" value="459"/>
</dbReference>
<dbReference type="STRING" id="224324.aq_284"/>
<dbReference type="EnsemblBacteria" id="AAC06605">
    <property type="protein sequence ID" value="AAC06605"/>
    <property type="gene ID" value="aq_284"/>
</dbReference>
<dbReference type="KEGG" id="aae:aq_284"/>
<dbReference type="PATRIC" id="fig|224324.8.peg.236"/>
<dbReference type="eggNOG" id="COG0621">
    <property type="taxonomic scope" value="Bacteria"/>
</dbReference>
<dbReference type="HOGENOM" id="CLU_018697_2_0_0"/>
<dbReference type="InParanoid" id="O66638"/>
<dbReference type="OrthoDB" id="9805215at2"/>
<dbReference type="Proteomes" id="UP000000798">
    <property type="component" value="Chromosome"/>
</dbReference>
<dbReference type="GO" id="GO:0005829">
    <property type="term" value="C:cytosol"/>
    <property type="evidence" value="ECO:0000318"/>
    <property type="project" value="GO_Central"/>
</dbReference>
<dbReference type="GO" id="GO:0051539">
    <property type="term" value="F:4 iron, 4 sulfur cluster binding"/>
    <property type="evidence" value="ECO:0000318"/>
    <property type="project" value="GO_Central"/>
</dbReference>
<dbReference type="GO" id="GO:0046872">
    <property type="term" value="F:metal ion binding"/>
    <property type="evidence" value="ECO:0007669"/>
    <property type="project" value="UniProtKB-KW"/>
</dbReference>
<dbReference type="GO" id="GO:0035597">
    <property type="term" value="F:N6-isopentenyladenosine methylthiotransferase activity"/>
    <property type="evidence" value="ECO:0000318"/>
    <property type="project" value="GO_Central"/>
</dbReference>
<dbReference type="GO" id="GO:0035600">
    <property type="term" value="P:tRNA methylthiolation"/>
    <property type="evidence" value="ECO:0000318"/>
    <property type="project" value="GO_Central"/>
</dbReference>
<dbReference type="CDD" id="cd01335">
    <property type="entry name" value="Radical_SAM"/>
    <property type="match status" value="1"/>
</dbReference>
<dbReference type="FunFam" id="3.40.50.12160:FF:000006">
    <property type="entry name" value="tRNA-2-methylthio-N(6)-dimethylallyladenosine synthase"/>
    <property type="match status" value="1"/>
</dbReference>
<dbReference type="FunFam" id="3.80.30.20:FF:000001">
    <property type="entry name" value="tRNA-2-methylthio-N(6)-dimethylallyladenosine synthase 2"/>
    <property type="match status" value="1"/>
</dbReference>
<dbReference type="Gene3D" id="3.40.50.12160">
    <property type="entry name" value="Methylthiotransferase, N-terminal domain"/>
    <property type="match status" value="1"/>
</dbReference>
<dbReference type="Gene3D" id="3.80.30.20">
    <property type="entry name" value="tm_1862 like domain"/>
    <property type="match status" value="1"/>
</dbReference>
<dbReference type="HAMAP" id="MF_01864">
    <property type="entry name" value="tRNA_metthiotr_MiaB"/>
    <property type="match status" value="1"/>
</dbReference>
<dbReference type="InterPro" id="IPR006638">
    <property type="entry name" value="Elp3/MiaA/NifB-like_rSAM"/>
</dbReference>
<dbReference type="InterPro" id="IPR005839">
    <property type="entry name" value="Methylthiotransferase"/>
</dbReference>
<dbReference type="InterPro" id="IPR020612">
    <property type="entry name" value="Methylthiotransferase_CS"/>
</dbReference>
<dbReference type="InterPro" id="IPR013848">
    <property type="entry name" value="Methylthiotransferase_N"/>
</dbReference>
<dbReference type="InterPro" id="IPR038135">
    <property type="entry name" value="Methylthiotransferase_N_sf"/>
</dbReference>
<dbReference type="InterPro" id="IPR006463">
    <property type="entry name" value="MiaB_methiolase"/>
</dbReference>
<dbReference type="InterPro" id="IPR007197">
    <property type="entry name" value="rSAM"/>
</dbReference>
<dbReference type="InterPro" id="IPR023404">
    <property type="entry name" value="rSAM_horseshoe"/>
</dbReference>
<dbReference type="InterPro" id="IPR002792">
    <property type="entry name" value="TRAM_dom"/>
</dbReference>
<dbReference type="NCBIfam" id="TIGR01574">
    <property type="entry name" value="miaB-methiolase"/>
    <property type="match status" value="1"/>
</dbReference>
<dbReference type="NCBIfam" id="TIGR00089">
    <property type="entry name" value="MiaB/RimO family radical SAM methylthiotransferase"/>
    <property type="match status" value="1"/>
</dbReference>
<dbReference type="PANTHER" id="PTHR43020">
    <property type="entry name" value="CDK5 REGULATORY SUBUNIT-ASSOCIATED PROTEIN 1"/>
    <property type="match status" value="1"/>
</dbReference>
<dbReference type="PANTHER" id="PTHR43020:SF2">
    <property type="entry name" value="MITOCHONDRIAL TRNA METHYLTHIOTRANSFERASE CDK5RAP1"/>
    <property type="match status" value="1"/>
</dbReference>
<dbReference type="Pfam" id="PF04055">
    <property type="entry name" value="Radical_SAM"/>
    <property type="match status" value="1"/>
</dbReference>
<dbReference type="Pfam" id="PF01938">
    <property type="entry name" value="TRAM"/>
    <property type="match status" value="1"/>
</dbReference>
<dbReference type="Pfam" id="PF00919">
    <property type="entry name" value="UPF0004"/>
    <property type="match status" value="1"/>
</dbReference>
<dbReference type="SFLD" id="SFLDF00273">
    <property type="entry name" value="(dimethylallyl)adenosine_tRNA"/>
    <property type="match status" value="1"/>
</dbReference>
<dbReference type="SFLD" id="SFLDG01082">
    <property type="entry name" value="B12-binding_domain_containing"/>
    <property type="match status" value="1"/>
</dbReference>
<dbReference type="SFLD" id="SFLDS00029">
    <property type="entry name" value="Radical_SAM"/>
    <property type="match status" value="1"/>
</dbReference>
<dbReference type="SMART" id="SM00729">
    <property type="entry name" value="Elp3"/>
    <property type="match status" value="1"/>
</dbReference>
<dbReference type="SUPFAM" id="SSF102114">
    <property type="entry name" value="Radical SAM enzymes"/>
    <property type="match status" value="1"/>
</dbReference>
<dbReference type="PROSITE" id="PS51449">
    <property type="entry name" value="MTTASE_N"/>
    <property type="match status" value="1"/>
</dbReference>
<dbReference type="PROSITE" id="PS01278">
    <property type="entry name" value="MTTASE_RADICAL"/>
    <property type="match status" value="1"/>
</dbReference>
<dbReference type="PROSITE" id="PS51918">
    <property type="entry name" value="RADICAL_SAM"/>
    <property type="match status" value="1"/>
</dbReference>
<dbReference type="PROSITE" id="PS50926">
    <property type="entry name" value="TRAM"/>
    <property type="match status" value="1"/>
</dbReference>
<protein>
    <recommendedName>
        <fullName evidence="1">tRNA-2-methylthio-N(6)-dimethylallyladenosine synthase</fullName>
        <ecNumber evidence="1">2.8.4.3</ecNumber>
    </recommendedName>
    <alternativeName>
        <fullName evidence="1">(Dimethylallyl)adenosine tRNA methylthiotransferase MiaB</fullName>
    </alternativeName>
    <alternativeName>
        <fullName evidence="1">tRNA-i(6)A37 methylthiotransferase</fullName>
    </alternativeName>
</protein>
<comment type="function">
    <text evidence="1">Catalyzes the methylthiolation of N6-(dimethylallyl)adenosine (i(6)A), leading to the formation of 2-methylthio-N6-(dimethylallyl)adenosine (ms(2)i(6)A) at position 37 in tRNAs that read codons beginning with uridine.</text>
</comment>
<comment type="catalytic activity">
    <reaction evidence="1">
        <text>N(6)-dimethylallyladenosine(37) in tRNA + (sulfur carrier)-SH + AH2 + 2 S-adenosyl-L-methionine = 2-methylsulfanyl-N(6)-dimethylallyladenosine(37) in tRNA + (sulfur carrier)-H + 5'-deoxyadenosine + L-methionine + A + S-adenosyl-L-homocysteine + 2 H(+)</text>
        <dbReference type="Rhea" id="RHEA:37067"/>
        <dbReference type="Rhea" id="RHEA-COMP:10375"/>
        <dbReference type="Rhea" id="RHEA-COMP:10376"/>
        <dbReference type="Rhea" id="RHEA-COMP:14737"/>
        <dbReference type="Rhea" id="RHEA-COMP:14739"/>
        <dbReference type="ChEBI" id="CHEBI:13193"/>
        <dbReference type="ChEBI" id="CHEBI:15378"/>
        <dbReference type="ChEBI" id="CHEBI:17319"/>
        <dbReference type="ChEBI" id="CHEBI:17499"/>
        <dbReference type="ChEBI" id="CHEBI:29917"/>
        <dbReference type="ChEBI" id="CHEBI:57844"/>
        <dbReference type="ChEBI" id="CHEBI:57856"/>
        <dbReference type="ChEBI" id="CHEBI:59789"/>
        <dbReference type="ChEBI" id="CHEBI:64428"/>
        <dbReference type="ChEBI" id="CHEBI:74415"/>
        <dbReference type="ChEBI" id="CHEBI:74417"/>
        <dbReference type="EC" id="2.8.4.3"/>
    </reaction>
</comment>
<comment type="cofactor">
    <cofactor evidence="1">
        <name>[4Fe-4S] cluster</name>
        <dbReference type="ChEBI" id="CHEBI:49883"/>
    </cofactor>
    <text evidence="1">Binds 2 [4Fe-4S] clusters. One cluster is coordinated with 3 cysteines and an exchangeable S-adenosyl-L-methionine.</text>
</comment>
<comment type="subunit">
    <text evidence="1">Monomer.</text>
</comment>
<comment type="subcellular location">
    <subcellularLocation>
        <location evidence="1">Cytoplasm</location>
    </subcellularLocation>
</comment>
<comment type="similarity">
    <text evidence="1">Belongs to the methylthiotransferase family. MiaB subfamily.</text>
</comment>
<organism>
    <name type="scientific">Aquifex aeolicus (strain VF5)</name>
    <dbReference type="NCBI Taxonomy" id="224324"/>
    <lineage>
        <taxon>Bacteria</taxon>
        <taxon>Pseudomonadati</taxon>
        <taxon>Aquificota</taxon>
        <taxon>Aquificia</taxon>
        <taxon>Aquificales</taxon>
        <taxon>Aquificaceae</taxon>
        <taxon>Aquifex</taxon>
    </lineage>
</organism>
<reference key="1">
    <citation type="journal article" date="1998" name="Nature">
        <title>The complete genome of the hyperthermophilic bacterium Aquifex aeolicus.</title>
        <authorList>
            <person name="Deckert G."/>
            <person name="Warren P.V."/>
            <person name="Gaasterland T."/>
            <person name="Young W.G."/>
            <person name="Lenox A.L."/>
            <person name="Graham D.E."/>
            <person name="Overbeek R."/>
            <person name="Snead M.A."/>
            <person name="Keller M."/>
            <person name="Aujay M."/>
            <person name="Huber R."/>
            <person name="Feldman R.A."/>
            <person name="Short J.M."/>
            <person name="Olsen G.J."/>
            <person name="Swanson R.V."/>
        </authorList>
    </citation>
    <scope>NUCLEOTIDE SEQUENCE [LARGE SCALE GENOMIC DNA]</scope>
    <source>
        <strain>VF5</strain>
    </source>
</reference>
<keyword id="KW-0004">4Fe-4S</keyword>
<keyword id="KW-0963">Cytoplasm</keyword>
<keyword id="KW-0408">Iron</keyword>
<keyword id="KW-0411">Iron-sulfur</keyword>
<keyword id="KW-0479">Metal-binding</keyword>
<keyword id="KW-1185">Reference proteome</keyword>
<keyword id="KW-0949">S-adenosyl-L-methionine</keyword>
<keyword id="KW-0808">Transferase</keyword>
<keyword id="KW-0819">tRNA processing</keyword>
<accession>O66638</accession>
<feature type="chain" id="PRO_0000141725" description="tRNA-2-methylthio-N(6)-dimethylallyladenosine synthase">
    <location>
        <begin position="1"/>
        <end position="440"/>
    </location>
</feature>
<feature type="domain" description="MTTase N-terminal" evidence="1">
    <location>
        <begin position="3"/>
        <end position="119"/>
    </location>
</feature>
<feature type="domain" description="Radical SAM core" evidence="2">
    <location>
        <begin position="144"/>
        <end position="374"/>
    </location>
</feature>
<feature type="domain" description="TRAM" evidence="1">
    <location>
        <begin position="377"/>
        <end position="437"/>
    </location>
</feature>
<feature type="binding site" evidence="1">
    <location>
        <position position="12"/>
    </location>
    <ligand>
        <name>[4Fe-4S] cluster</name>
        <dbReference type="ChEBI" id="CHEBI:49883"/>
        <label>1</label>
    </ligand>
</feature>
<feature type="binding site" evidence="1">
    <location>
        <position position="48"/>
    </location>
    <ligand>
        <name>[4Fe-4S] cluster</name>
        <dbReference type="ChEBI" id="CHEBI:49883"/>
        <label>1</label>
    </ligand>
</feature>
<feature type="binding site" evidence="1">
    <location>
        <position position="82"/>
    </location>
    <ligand>
        <name>[4Fe-4S] cluster</name>
        <dbReference type="ChEBI" id="CHEBI:49883"/>
        <label>1</label>
    </ligand>
</feature>
<feature type="binding site" evidence="1">
    <location>
        <position position="158"/>
    </location>
    <ligand>
        <name>[4Fe-4S] cluster</name>
        <dbReference type="ChEBI" id="CHEBI:49883"/>
        <label>2</label>
        <note>4Fe-4S-S-AdoMet</note>
    </ligand>
</feature>
<feature type="binding site" evidence="1">
    <location>
        <position position="162"/>
    </location>
    <ligand>
        <name>[4Fe-4S] cluster</name>
        <dbReference type="ChEBI" id="CHEBI:49883"/>
        <label>2</label>
        <note>4Fe-4S-S-AdoMet</note>
    </ligand>
</feature>
<feature type="binding site" evidence="1">
    <location>
        <position position="165"/>
    </location>
    <ligand>
        <name>[4Fe-4S] cluster</name>
        <dbReference type="ChEBI" id="CHEBI:49883"/>
        <label>2</label>
        <note>4Fe-4S-S-AdoMet</note>
    </ligand>
</feature>
<sequence length="440" mass="50321">MSKKFFIKTFGCQMNFNDSERIRGLLKTIGYEQTDNWEEADLIILNTCTIREKPDQKVLSHLGEYKKIKEKNPKALIAVAGCLAQRTGWELVKKAPVIDIMFSSFNMHQLPELINQAQAGYKAIAILDELPQDEDKIWEYPVERDNKYCAYVTIIKGCDKNCTYCVVPRTRGKERSRALHSILDEVKRLVDDGVREIHLLGQNVTAWGKDFEKPIPFSELLYQVSKIDGVERIRFTTGHPRDLTDDIIEAMADIPQVCNALHLPFQAGSNRILALMDRGYTKEEYLEKIEKLKEKVKDIAMSTDVIVGFPTETEEDFEHTLDVLKKVRFEQVFSFKFSPRPGTPAAEMEGQIPDDVKTERMRRLLELQKSILSEIAKKYEGTVQEVLVEEEKNGELIGRTTTNKWASFKGDPSLLGKIVKIKVIKSSPFSLEGELLEVIK</sequence>
<evidence type="ECO:0000255" key="1">
    <source>
        <dbReference type="HAMAP-Rule" id="MF_01864"/>
    </source>
</evidence>
<evidence type="ECO:0000255" key="2">
    <source>
        <dbReference type="PROSITE-ProRule" id="PRU01266"/>
    </source>
</evidence>
<proteinExistence type="inferred from homology"/>
<name>MIAB_AQUAE</name>